<sequence length="380" mass="42234">MASLRKSHPLLKIANHILVDLPAPSNISAWWNFGSLLGLCLATQILTGLFLAMHYTSDIATAFSSVMHICRDVNYGWLIRNMHANGASFFFICIYLHIGRGLYYGSYLYKETWNVGVALFLLTMMTAFVGYVLPWGQMSFWGATVITNLMSAVPYVGNDLVQWIWGGFSVDNATLTRFFAFHFLFPFVIAALTAIHLLFLHETGSNNPAGLNSDADKVTFHPYFSYKDLLGFATLMVTLTSLALFSPNLLGDPDNFTPANPLVTPPHIKPEWYFLFAYAILRSIPNKLGGVLALLSSILILTAVPALHASKQRSTTFRPITQLLFWTLVAAVLVLTWIGGMPVEHPFIIIGQIASLLYFMLFLTLIPAAALAENKALEWN</sequence>
<accession>Q94T21</accession>
<keyword id="KW-0249">Electron transport</keyword>
<keyword id="KW-0349">Heme</keyword>
<keyword id="KW-0408">Iron</keyword>
<keyword id="KW-0472">Membrane</keyword>
<keyword id="KW-0479">Metal-binding</keyword>
<keyword id="KW-0496">Mitochondrion</keyword>
<keyword id="KW-0999">Mitochondrion inner membrane</keyword>
<keyword id="KW-0679">Respiratory chain</keyword>
<keyword id="KW-0812">Transmembrane</keyword>
<keyword id="KW-1133">Transmembrane helix</keyword>
<keyword id="KW-0813">Transport</keyword>
<keyword id="KW-0830">Ubiquinone</keyword>
<geneLocation type="mitochondrion"/>
<gene>
    <name type="primary">mt-cyb</name>
    <name type="synonym">cob</name>
    <name type="synonym">cytb</name>
    <name type="synonym">mtcyb</name>
</gene>
<comment type="function">
    <text evidence="2">Component of the ubiquinol-cytochrome c reductase complex (complex III or cytochrome b-c1 complex) that is part of the mitochondrial respiratory chain. The b-c1 complex mediates electron transfer from ubiquinol to cytochrome c. Contributes to the generation of a proton gradient across the mitochondrial membrane that is then used for ATP synthesis.</text>
</comment>
<comment type="cofactor">
    <cofactor evidence="2">
        <name>heme b</name>
        <dbReference type="ChEBI" id="CHEBI:60344"/>
    </cofactor>
    <text evidence="2">Binds 2 heme b groups non-covalently.</text>
</comment>
<comment type="subunit">
    <text evidence="2">The cytochrome bc1 complex contains 3 respiratory subunits (MT-CYB, CYC1 and UQCRFS1), 2 core proteins (UQCRC1 and UQCRC2) and probably 6 low-molecular weight proteins.</text>
</comment>
<comment type="subcellular location">
    <subcellularLocation>
        <location evidence="2">Mitochondrion inner membrane</location>
        <topology evidence="2">Multi-pass membrane protein</topology>
    </subcellularLocation>
</comment>
<comment type="miscellaneous">
    <text evidence="1">Heme 1 (or BL or b562) is low-potential and absorbs at about 562 nm, and heme 2 (or BH or b566) is high-potential and absorbs at about 566 nm.</text>
</comment>
<comment type="similarity">
    <text evidence="3 4">Belongs to the cytochrome b family.</text>
</comment>
<comment type="caution">
    <text evidence="2">The full-length protein contains only eight transmembrane helices, not nine as predicted by bioinformatics tools.</text>
</comment>
<feature type="chain" id="PRO_0000061373" description="Cytochrome b">
    <location>
        <begin position="1"/>
        <end position="380"/>
    </location>
</feature>
<feature type="transmembrane region" description="Helical" evidence="2">
    <location>
        <begin position="33"/>
        <end position="53"/>
    </location>
</feature>
<feature type="transmembrane region" description="Helical" evidence="2">
    <location>
        <begin position="77"/>
        <end position="98"/>
    </location>
</feature>
<feature type="transmembrane region" description="Helical" evidence="2">
    <location>
        <begin position="113"/>
        <end position="133"/>
    </location>
</feature>
<feature type="transmembrane region" description="Helical" evidence="2">
    <location>
        <begin position="178"/>
        <end position="198"/>
    </location>
</feature>
<feature type="transmembrane region" description="Helical" evidence="2">
    <location>
        <begin position="226"/>
        <end position="246"/>
    </location>
</feature>
<feature type="transmembrane region" description="Helical" evidence="2">
    <location>
        <begin position="288"/>
        <end position="308"/>
    </location>
</feature>
<feature type="transmembrane region" description="Helical" evidence="2">
    <location>
        <begin position="320"/>
        <end position="340"/>
    </location>
</feature>
<feature type="transmembrane region" description="Helical" evidence="2">
    <location>
        <begin position="347"/>
        <end position="367"/>
    </location>
</feature>
<feature type="binding site" description="axial binding residue" evidence="2">
    <location>
        <position position="83"/>
    </location>
    <ligand>
        <name>heme b</name>
        <dbReference type="ChEBI" id="CHEBI:60344"/>
        <label>b562</label>
    </ligand>
    <ligandPart>
        <name>Fe</name>
        <dbReference type="ChEBI" id="CHEBI:18248"/>
    </ligandPart>
</feature>
<feature type="binding site" description="axial binding residue" evidence="2">
    <location>
        <position position="97"/>
    </location>
    <ligand>
        <name>heme b</name>
        <dbReference type="ChEBI" id="CHEBI:60344"/>
        <label>b566</label>
    </ligand>
    <ligandPart>
        <name>Fe</name>
        <dbReference type="ChEBI" id="CHEBI:18248"/>
    </ligandPart>
</feature>
<feature type="binding site" description="axial binding residue" evidence="2">
    <location>
        <position position="182"/>
    </location>
    <ligand>
        <name>heme b</name>
        <dbReference type="ChEBI" id="CHEBI:60344"/>
        <label>b562</label>
    </ligand>
    <ligandPart>
        <name>Fe</name>
        <dbReference type="ChEBI" id="CHEBI:18248"/>
    </ligandPart>
</feature>
<feature type="binding site" description="axial binding residue" evidence="2">
    <location>
        <position position="196"/>
    </location>
    <ligand>
        <name>heme b</name>
        <dbReference type="ChEBI" id="CHEBI:60344"/>
        <label>b566</label>
    </ligand>
    <ligandPart>
        <name>Fe</name>
        <dbReference type="ChEBI" id="CHEBI:18248"/>
    </ligandPart>
</feature>
<feature type="binding site" evidence="2">
    <location>
        <position position="201"/>
    </location>
    <ligand>
        <name>a ubiquinone</name>
        <dbReference type="ChEBI" id="CHEBI:16389"/>
    </ligand>
</feature>
<protein>
    <recommendedName>
        <fullName>Cytochrome b</fullName>
    </recommendedName>
    <alternativeName>
        <fullName>Complex III subunit 3</fullName>
    </alternativeName>
    <alternativeName>
        <fullName>Complex III subunit III</fullName>
    </alternativeName>
    <alternativeName>
        <fullName>Cytochrome b-c1 complex subunit 3</fullName>
    </alternativeName>
    <alternativeName>
        <fullName>Ubiquinol-cytochrome-c reductase complex cytochrome b subunit</fullName>
    </alternativeName>
</protein>
<name>CYB_PERTA</name>
<organism>
    <name type="scientific">Percopsis transmontana</name>
    <name type="common">Sand roller</name>
    <dbReference type="NCBI Taxonomy" id="143327"/>
    <lineage>
        <taxon>Eukaryota</taxon>
        <taxon>Metazoa</taxon>
        <taxon>Chordata</taxon>
        <taxon>Craniata</taxon>
        <taxon>Vertebrata</taxon>
        <taxon>Euteleostomi</taxon>
        <taxon>Actinopterygii</taxon>
        <taxon>Neopterygii</taxon>
        <taxon>Teleostei</taxon>
        <taxon>Neoteleostei</taxon>
        <taxon>Acanthomorphata</taxon>
        <taxon>Percopsaria</taxon>
        <taxon>Percopsiformes</taxon>
        <taxon>Percopsoidei</taxon>
        <taxon>Percopsidae</taxon>
        <taxon>Percopsis</taxon>
    </lineage>
</organism>
<dbReference type="EMBL" id="AP002928">
    <property type="protein sequence ID" value="BAB70156.1"/>
    <property type="molecule type" value="Genomic_DNA"/>
</dbReference>
<dbReference type="RefSeq" id="NP_443345.1">
    <property type="nucleotide sequence ID" value="NC_003168.1"/>
</dbReference>
<dbReference type="SMR" id="Q94T21"/>
<dbReference type="GeneID" id="804238"/>
<dbReference type="CTD" id="4519"/>
<dbReference type="GO" id="GO:0005743">
    <property type="term" value="C:mitochondrial inner membrane"/>
    <property type="evidence" value="ECO:0007669"/>
    <property type="project" value="UniProtKB-SubCell"/>
</dbReference>
<dbReference type="GO" id="GO:0045275">
    <property type="term" value="C:respiratory chain complex III"/>
    <property type="evidence" value="ECO:0007669"/>
    <property type="project" value="InterPro"/>
</dbReference>
<dbReference type="GO" id="GO:0046872">
    <property type="term" value="F:metal ion binding"/>
    <property type="evidence" value="ECO:0007669"/>
    <property type="project" value="UniProtKB-KW"/>
</dbReference>
<dbReference type="GO" id="GO:0008121">
    <property type="term" value="F:ubiquinol-cytochrome-c reductase activity"/>
    <property type="evidence" value="ECO:0007669"/>
    <property type="project" value="InterPro"/>
</dbReference>
<dbReference type="GO" id="GO:0006122">
    <property type="term" value="P:mitochondrial electron transport, ubiquinol to cytochrome c"/>
    <property type="evidence" value="ECO:0007669"/>
    <property type="project" value="TreeGrafter"/>
</dbReference>
<dbReference type="CDD" id="cd00290">
    <property type="entry name" value="cytochrome_b_C"/>
    <property type="match status" value="1"/>
</dbReference>
<dbReference type="CDD" id="cd00284">
    <property type="entry name" value="Cytochrome_b_N"/>
    <property type="match status" value="1"/>
</dbReference>
<dbReference type="FunFam" id="1.20.810.10:FF:000002">
    <property type="entry name" value="Cytochrome b"/>
    <property type="match status" value="1"/>
</dbReference>
<dbReference type="Gene3D" id="1.20.810.10">
    <property type="entry name" value="Cytochrome Bc1 Complex, Chain C"/>
    <property type="match status" value="1"/>
</dbReference>
<dbReference type="InterPro" id="IPR005798">
    <property type="entry name" value="Cyt_b/b6_C"/>
</dbReference>
<dbReference type="InterPro" id="IPR036150">
    <property type="entry name" value="Cyt_b/b6_C_sf"/>
</dbReference>
<dbReference type="InterPro" id="IPR005797">
    <property type="entry name" value="Cyt_b/b6_N"/>
</dbReference>
<dbReference type="InterPro" id="IPR027387">
    <property type="entry name" value="Cytb/b6-like_sf"/>
</dbReference>
<dbReference type="InterPro" id="IPR030689">
    <property type="entry name" value="Cytochrome_b"/>
</dbReference>
<dbReference type="InterPro" id="IPR048260">
    <property type="entry name" value="Cytochrome_b_C_euk/bac"/>
</dbReference>
<dbReference type="InterPro" id="IPR048259">
    <property type="entry name" value="Cytochrome_b_N_euk/bac"/>
</dbReference>
<dbReference type="InterPro" id="IPR016174">
    <property type="entry name" value="Di-haem_cyt_TM"/>
</dbReference>
<dbReference type="PANTHER" id="PTHR19271">
    <property type="entry name" value="CYTOCHROME B"/>
    <property type="match status" value="1"/>
</dbReference>
<dbReference type="PANTHER" id="PTHR19271:SF16">
    <property type="entry name" value="CYTOCHROME B"/>
    <property type="match status" value="1"/>
</dbReference>
<dbReference type="Pfam" id="PF00032">
    <property type="entry name" value="Cytochrom_B_C"/>
    <property type="match status" value="1"/>
</dbReference>
<dbReference type="Pfam" id="PF00033">
    <property type="entry name" value="Cytochrome_B"/>
    <property type="match status" value="1"/>
</dbReference>
<dbReference type="PIRSF" id="PIRSF038885">
    <property type="entry name" value="COB"/>
    <property type="match status" value="1"/>
</dbReference>
<dbReference type="SUPFAM" id="SSF81648">
    <property type="entry name" value="a domain/subunit of cytochrome bc1 complex (Ubiquinol-cytochrome c reductase)"/>
    <property type="match status" value="1"/>
</dbReference>
<dbReference type="SUPFAM" id="SSF81342">
    <property type="entry name" value="Transmembrane di-heme cytochromes"/>
    <property type="match status" value="1"/>
</dbReference>
<dbReference type="PROSITE" id="PS51003">
    <property type="entry name" value="CYTB_CTER"/>
    <property type="match status" value="1"/>
</dbReference>
<dbReference type="PROSITE" id="PS51002">
    <property type="entry name" value="CYTB_NTER"/>
    <property type="match status" value="1"/>
</dbReference>
<proteinExistence type="inferred from homology"/>
<reference key="1">
    <citation type="journal article" date="2001" name="Mol. Biol. Evol.">
        <title>Mitogenomic exploration of higher teleostean phylogenies: a case study for moderate-scale evolutionary genomics with 38 newly determined complete mitochondrial DNA sequences.</title>
        <authorList>
            <person name="Miya M."/>
            <person name="Kawaguchi A."/>
            <person name="Nishida M."/>
        </authorList>
    </citation>
    <scope>NUCLEOTIDE SEQUENCE [GENOMIC DNA]</scope>
</reference>
<evidence type="ECO:0000250" key="1"/>
<evidence type="ECO:0000250" key="2">
    <source>
        <dbReference type="UniProtKB" id="P00157"/>
    </source>
</evidence>
<evidence type="ECO:0000255" key="3">
    <source>
        <dbReference type="PROSITE-ProRule" id="PRU00967"/>
    </source>
</evidence>
<evidence type="ECO:0000255" key="4">
    <source>
        <dbReference type="PROSITE-ProRule" id="PRU00968"/>
    </source>
</evidence>